<feature type="chain" id="PRO_0000252684" description="Platelet-activating factor acetylhydrolase IB subunit alpha2">
    <location>
        <begin position="1"/>
        <end position="229"/>
    </location>
</feature>
<feature type="active site" evidence="1">
    <location>
        <position position="48"/>
    </location>
</feature>
<feature type="active site" evidence="1">
    <location>
        <position position="193"/>
    </location>
</feature>
<feature type="active site" evidence="1">
    <location>
        <position position="196"/>
    </location>
</feature>
<gene>
    <name type="primary">PAFAH1B2</name>
    <name type="synonym">PAFAHB</name>
    <name type="ORF">RCJMB04_1f10</name>
</gene>
<dbReference type="EC" id="3.1.1.47" evidence="3"/>
<dbReference type="EMBL" id="AJ719312">
    <property type="protein sequence ID" value="CAG30971.1"/>
    <property type="molecule type" value="mRNA"/>
</dbReference>
<dbReference type="SMR" id="Q5ZMS2"/>
<dbReference type="FunCoup" id="Q5ZMS2">
    <property type="interactions" value="2846"/>
</dbReference>
<dbReference type="STRING" id="9031.ENSGALP00000072063"/>
<dbReference type="PaxDb" id="9031-ENSGALP00000042949"/>
<dbReference type="VEuPathDB" id="HostDB:geneid_419765"/>
<dbReference type="eggNOG" id="KOG1388">
    <property type="taxonomic scope" value="Eukaryota"/>
</dbReference>
<dbReference type="InParanoid" id="Q5ZMS2"/>
<dbReference type="OrthoDB" id="505607at2759"/>
<dbReference type="PhylomeDB" id="Q5ZMS2"/>
<dbReference type="Proteomes" id="UP000000539">
    <property type="component" value="Unassembled WGS sequence"/>
</dbReference>
<dbReference type="GO" id="GO:0008247">
    <property type="term" value="C:1-alkyl-2-acetylglycerophosphocholine esterase complex"/>
    <property type="evidence" value="ECO:0000250"/>
    <property type="project" value="UniProtKB"/>
</dbReference>
<dbReference type="GO" id="GO:0005737">
    <property type="term" value="C:cytoplasm"/>
    <property type="evidence" value="ECO:0000318"/>
    <property type="project" value="GO_Central"/>
</dbReference>
<dbReference type="GO" id="GO:0003847">
    <property type="term" value="F:1-alkyl-2-acetylglycerophosphocholine esterase activity"/>
    <property type="evidence" value="ECO:0000250"/>
    <property type="project" value="UniProtKB"/>
</dbReference>
<dbReference type="GO" id="GO:0047179">
    <property type="term" value="F:platelet-activating factor acetyltransferase activity"/>
    <property type="evidence" value="ECO:0000318"/>
    <property type="project" value="GO_Central"/>
</dbReference>
<dbReference type="GO" id="GO:0046982">
    <property type="term" value="F:protein heterodimerization activity"/>
    <property type="evidence" value="ECO:0000250"/>
    <property type="project" value="UniProtKB"/>
</dbReference>
<dbReference type="GO" id="GO:0042803">
    <property type="term" value="F:protein homodimerization activity"/>
    <property type="evidence" value="ECO:0000250"/>
    <property type="project" value="UniProtKB"/>
</dbReference>
<dbReference type="GO" id="GO:0016042">
    <property type="term" value="P:lipid catabolic process"/>
    <property type="evidence" value="ECO:0007669"/>
    <property type="project" value="UniProtKB-KW"/>
</dbReference>
<dbReference type="GO" id="GO:0007283">
    <property type="term" value="P:spermatogenesis"/>
    <property type="evidence" value="ECO:0000250"/>
    <property type="project" value="UniProtKB"/>
</dbReference>
<dbReference type="CDD" id="cd01820">
    <property type="entry name" value="PAF_acetylesterase_like"/>
    <property type="match status" value="1"/>
</dbReference>
<dbReference type="FunFam" id="3.40.50.1110:FF:000004">
    <property type="entry name" value="Platelet-activating factor acetylhydrolase IB subunit beta"/>
    <property type="match status" value="1"/>
</dbReference>
<dbReference type="Gene3D" id="3.40.50.1110">
    <property type="entry name" value="SGNH hydrolase"/>
    <property type="match status" value="1"/>
</dbReference>
<dbReference type="InterPro" id="IPR013830">
    <property type="entry name" value="SGNH_hydro"/>
</dbReference>
<dbReference type="InterPro" id="IPR036514">
    <property type="entry name" value="SGNH_hydro_sf"/>
</dbReference>
<dbReference type="PANTHER" id="PTHR11852">
    <property type="entry name" value="PLATELET-ACTIVATING FACTOR ACETYLHYDROLASE"/>
    <property type="match status" value="1"/>
</dbReference>
<dbReference type="PANTHER" id="PTHR11852:SF1">
    <property type="entry name" value="PLATELET-ACTIVATING FACTOR ACETYLHYDROLASE IB SUBUNIT ALPHA2"/>
    <property type="match status" value="1"/>
</dbReference>
<dbReference type="Pfam" id="PF13472">
    <property type="entry name" value="Lipase_GDSL_2"/>
    <property type="match status" value="1"/>
</dbReference>
<dbReference type="SUPFAM" id="SSF52266">
    <property type="entry name" value="SGNH hydrolase"/>
    <property type="match status" value="1"/>
</dbReference>
<comment type="function">
    <text evidence="3">Alpha2 catalytic subunit of the cytosolic type I platelet-activating factor (PAF) acetylhydrolase (PAF-AH (I)) heterotetrameric enzyme that catalyzes the hydrolyze of the acetyl group at the sn-2 position of PAF and its analogs and modulates the action of PAF.</text>
</comment>
<comment type="catalytic activity">
    <reaction evidence="3">
        <text>a 1-O-alkyl-2-acetyl-sn-glycero-3-phosphocholine + H2O = a 1-O-alkyl-sn-glycero-3-phosphocholine + acetate + H(+)</text>
        <dbReference type="Rhea" id="RHEA:17777"/>
        <dbReference type="ChEBI" id="CHEBI:15377"/>
        <dbReference type="ChEBI" id="CHEBI:15378"/>
        <dbReference type="ChEBI" id="CHEBI:30089"/>
        <dbReference type="ChEBI" id="CHEBI:30909"/>
        <dbReference type="ChEBI" id="CHEBI:36707"/>
        <dbReference type="EC" id="3.1.1.47"/>
    </reaction>
    <physiologicalReaction direction="left-to-right" evidence="3">
        <dbReference type="Rhea" id="RHEA:17778"/>
    </physiologicalReaction>
</comment>
<comment type="catalytic activity">
    <reaction evidence="3">
        <text>1-O-hexadecyl-2-acetyl-sn-glycero-3-phosphocholine + H2O = 1-O-hexadecyl-sn-glycero-3-phosphocholine + acetate + H(+)</text>
        <dbReference type="Rhea" id="RHEA:40479"/>
        <dbReference type="ChEBI" id="CHEBI:15377"/>
        <dbReference type="ChEBI" id="CHEBI:15378"/>
        <dbReference type="ChEBI" id="CHEBI:30089"/>
        <dbReference type="ChEBI" id="CHEBI:44811"/>
        <dbReference type="ChEBI" id="CHEBI:64496"/>
    </reaction>
    <physiologicalReaction direction="left-to-right" evidence="3">
        <dbReference type="Rhea" id="RHEA:40480"/>
    </physiologicalReaction>
</comment>
<comment type="catalytic activity">
    <reaction evidence="3">
        <text>1-O-hexadecyl-2-acetyl-sn-glycero-3-phosphate + H2O = 1-O-hexadecyl-sn-glycero-3-phosphate + acetate + H(+)</text>
        <dbReference type="Rhea" id="RHEA:41704"/>
        <dbReference type="ChEBI" id="CHEBI:15377"/>
        <dbReference type="ChEBI" id="CHEBI:15378"/>
        <dbReference type="ChEBI" id="CHEBI:30089"/>
        <dbReference type="ChEBI" id="CHEBI:77580"/>
        <dbReference type="ChEBI" id="CHEBI:78385"/>
    </reaction>
    <physiologicalReaction direction="left-to-right" evidence="3">
        <dbReference type="Rhea" id="RHEA:41705"/>
    </physiologicalReaction>
</comment>
<comment type="catalytic activity">
    <reaction evidence="3">
        <text>1-O-hexadecyl-2-acetyl-sn-glycero-3-phosphoethanolamine + H2O = 1-O-hexadecyl-sn-glycero-3-phosphoethanolamine + acetate + H(+)</text>
        <dbReference type="Rhea" id="RHEA:41708"/>
        <dbReference type="ChEBI" id="CHEBI:15377"/>
        <dbReference type="ChEBI" id="CHEBI:15378"/>
        <dbReference type="ChEBI" id="CHEBI:30089"/>
        <dbReference type="ChEBI" id="CHEBI:78387"/>
        <dbReference type="ChEBI" id="CHEBI:78390"/>
    </reaction>
    <physiologicalReaction direction="left-to-right" evidence="3">
        <dbReference type="Rhea" id="RHEA:41709"/>
    </physiologicalReaction>
</comment>
<comment type="subunit">
    <text evidence="3">Forms a catalytic dimer which is either homodimer (alpha2/alpha2 homodimer) or heterodimer with PAFAH1B3 (alpha2/alpha1 heterodimer). Component of the cytosolic (PAF-AH (I)) heterotetrameric enzyme, which is composed of PAFAH1B1 (beta), PAFAH1B2 (alpha2) and PAFAH1B3 (alpha1) subunits. The catalytic activity of the enzyme resides in the alpha1 (PAFAH1B3) and alpha2 (PAFAH1B2) subunits, whereas the beta subunit (PAFAH1B1) has regulatory activity. Trimer formation is not essential for the catalytic activity.</text>
</comment>
<comment type="subcellular location">
    <subcellularLocation>
        <location evidence="1">Cytoplasm</location>
    </subcellularLocation>
</comment>
<comment type="miscellaneous">
    <text evidence="2 4 5 6">Originally the subunits of the type I platelet-activating factor (PAF) acetylhydrolase was named alpha (PAFAH1B1), beta (PAFAH1B2) and gamma (PAFAH1B3) (By similarity). Now these subunits have been renamed beta (PAFAH1B1), alpha2 (PAFAH1B2) and alpha1 (PAFAH1B3) respectively (By similarity).</text>
</comment>
<comment type="similarity">
    <text evidence="7">Belongs to the 'GDSL' lipolytic enzyme family. Platelet-activating factor acetylhydrolase IB beta/gamma subunits subfamily.</text>
</comment>
<proteinExistence type="evidence at transcript level"/>
<organism>
    <name type="scientific">Gallus gallus</name>
    <name type="common">Chicken</name>
    <dbReference type="NCBI Taxonomy" id="9031"/>
    <lineage>
        <taxon>Eukaryota</taxon>
        <taxon>Metazoa</taxon>
        <taxon>Chordata</taxon>
        <taxon>Craniata</taxon>
        <taxon>Vertebrata</taxon>
        <taxon>Euteleostomi</taxon>
        <taxon>Archelosauria</taxon>
        <taxon>Archosauria</taxon>
        <taxon>Dinosauria</taxon>
        <taxon>Saurischia</taxon>
        <taxon>Theropoda</taxon>
        <taxon>Coelurosauria</taxon>
        <taxon>Aves</taxon>
        <taxon>Neognathae</taxon>
        <taxon>Galloanserae</taxon>
        <taxon>Galliformes</taxon>
        <taxon>Phasianidae</taxon>
        <taxon>Phasianinae</taxon>
        <taxon>Gallus</taxon>
    </lineage>
</organism>
<sequence length="229" mass="25567">MSHGDSNPAAVPHAADDIQGDDRWMSQHNRFVSDCKDKEPDVLFVGDSMVQLLQQYEIWRELFSPLHALNFWIGGDTTGHVLWRLKNGELENIKPKVIVVWVGTNNYGNTAEEVAGGIEAIVRLINTQQPQAKVIVLGLLPRGEKPNPLRQKNAKVNHLLKASLPKLPNVQLLDVDAGFVHSDGTISYHDMFDFLHLTGGAYAKICKPLHELIMQLLEETPEEKRAALA</sequence>
<protein>
    <recommendedName>
        <fullName evidence="3">Platelet-activating factor acetylhydrolase IB subunit alpha2</fullName>
        <ecNumber evidence="3">3.1.1.47</ecNumber>
    </recommendedName>
    <alternativeName>
        <fullName>PAF acetylhydrolase 30 kDa subunit</fullName>
        <shortName>PAF-AH 30 kDa subunit</shortName>
    </alternativeName>
    <alternativeName>
        <fullName>PAF-AH subunit beta</fullName>
    </alternativeName>
    <alternativeName>
        <fullName>PAFAH subunit beta</fullName>
    </alternativeName>
</protein>
<evidence type="ECO:0000250" key="1"/>
<evidence type="ECO:0000250" key="2">
    <source>
        <dbReference type="UniProtKB" id="P43034"/>
    </source>
</evidence>
<evidence type="ECO:0000250" key="3">
    <source>
        <dbReference type="UniProtKB" id="P68401"/>
    </source>
</evidence>
<evidence type="ECO:0000250" key="4">
    <source>
        <dbReference type="UniProtKB" id="P68402"/>
    </source>
</evidence>
<evidence type="ECO:0000250" key="5">
    <source>
        <dbReference type="UniProtKB" id="Q15102"/>
    </source>
</evidence>
<evidence type="ECO:0000250" key="6">
    <source>
        <dbReference type="UniProtKB" id="Q29460"/>
    </source>
</evidence>
<evidence type="ECO:0000305" key="7"/>
<name>PA1B2_CHICK</name>
<accession>Q5ZMS2</accession>
<reference key="1">
    <citation type="journal article" date="2005" name="Genome Biol.">
        <title>Full-length cDNAs from chicken bursal lymphocytes to facilitate gene function analysis.</title>
        <authorList>
            <person name="Caldwell R.B."/>
            <person name="Kierzek A.M."/>
            <person name="Arakawa H."/>
            <person name="Bezzubov Y."/>
            <person name="Zaim J."/>
            <person name="Fiedler P."/>
            <person name="Kutter S."/>
            <person name="Blagodatski A."/>
            <person name="Kostovska D."/>
            <person name="Koter M."/>
            <person name="Plachy J."/>
            <person name="Carninci P."/>
            <person name="Hayashizaki Y."/>
            <person name="Buerstedde J.-M."/>
        </authorList>
    </citation>
    <scope>NUCLEOTIDE SEQUENCE [LARGE SCALE MRNA]</scope>
    <source>
        <strain>CB</strain>
        <tissue>Bursa of Fabricius</tissue>
    </source>
</reference>
<keyword id="KW-0963">Cytoplasm</keyword>
<keyword id="KW-0378">Hydrolase</keyword>
<keyword id="KW-0442">Lipid degradation</keyword>
<keyword id="KW-0443">Lipid metabolism</keyword>
<keyword id="KW-1185">Reference proteome</keyword>